<name>VPP2_CAEEL</name>
<reference evidence="12" key="1">
    <citation type="journal article" date="2001" name="J. Biol. Chem.">
        <title>Four subunit a isoforms of Caenorhabditis elegans vacuolar H+-ATPase. Cell-specific expression during development.</title>
        <authorList>
            <person name="Oka T."/>
            <person name="Toyomura T."/>
            <person name="Honjo K."/>
            <person name="Wada Y."/>
            <person name="Futai M."/>
        </authorList>
    </citation>
    <scope>NUCLEOTIDE SEQUENCE [MRNA]</scope>
    <scope>INTERACTION WITH VHA-11</scope>
    <scope>SUBCELLULAR LOCATION</scope>
    <scope>TISSUE SPECIFICITY</scope>
    <scope>DEVELOPMENTAL STAGE</scope>
    <scope>DISRUPTION PHENOTYPE</scope>
</reference>
<reference evidence="14" key="2">
    <citation type="journal article" date="1998" name="Science">
        <title>Genome sequence of the nematode C. elegans: a platform for investigating biology.</title>
        <authorList>
            <consortium name="The C. elegans sequencing consortium"/>
        </authorList>
    </citation>
    <scope>NUCLEOTIDE SEQUENCE [LARGE SCALE GENOMIC DNA]</scope>
    <source>
        <strain evidence="14">Bristol N2</strain>
    </source>
</reference>
<reference evidence="11" key="3">
    <citation type="journal article" date="2006" name="J. Cell Biol.">
        <title>The V0-ATPase mediates apical secretion of exosomes containing Hedgehog-related proteins in Caenorhabditis elegans.</title>
        <authorList>
            <person name="Liegeois S."/>
            <person name="Benedetto A."/>
            <person name="Garnier J.M."/>
            <person name="Schwab Y."/>
            <person name="Labouesse M."/>
        </authorList>
    </citation>
    <scope>FUNCTION</scope>
    <scope>SUBCELLULAR LOCATION</scope>
    <scope>TISSUE SPECIFICITY</scope>
    <scope>DISRUPTION PHENOTYPE</scope>
    <scope>MUTAGENESIS OF TRP-190; ARG-191; TRP-327; LEU-786; GLU-830 AND VAL-844</scope>
</reference>
<reference evidence="11" key="4">
    <citation type="journal article" date="2007" name="Genetics">
        <title>Genes required for osmoregulation and apical secretion in Caenorhabditis elegans.</title>
        <authorList>
            <person name="Liegeois S."/>
            <person name="Benedetto A."/>
            <person name="Michaux G."/>
            <person name="Belliard G."/>
            <person name="Labouesse M."/>
        </authorList>
    </citation>
    <scope>FUNCTION</scope>
    <scope>SUBCELLULAR LOCATION</scope>
    <scope>TISSUE SPECIFICITY</scope>
    <scope>MUTAGENESIS OF LEU-786</scope>
</reference>
<protein>
    <recommendedName>
        <fullName evidence="11">V-type proton ATPase 116 kDa subunit a 2</fullName>
        <shortName evidence="11">V-ATPase 116 kDa isoform a 2</shortName>
    </recommendedName>
    <alternativeName>
        <fullName evidence="10">Rod-like larval lethality and dye-filling defective protein 1</fullName>
    </alternativeName>
</protein>
<evidence type="ECO:0000250" key="1">
    <source>
        <dbReference type="UniProtKB" id="G5EGP4"/>
    </source>
</evidence>
<evidence type="ECO:0000250" key="2">
    <source>
        <dbReference type="UniProtKB" id="Q29466"/>
    </source>
</evidence>
<evidence type="ECO:0000255" key="3"/>
<evidence type="ECO:0000255" key="4">
    <source>
        <dbReference type="PROSITE-ProRule" id="PRU00498"/>
    </source>
</evidence>
<evidence type="ECO:0000255" key="5">
    <source>
        <dbReference type="RuleBase" id="RU361189"/>
    </source>
</evidence>
<evidence type="ECO:0000269" key="6">
    <source>
    </source>
</evidence>
<evidence type="ECO:0000269" key="7">
    <source>
    </source>
</evidence>
<evidence type="ECO:0000269" key="8">
    <source>
    </source>
</evidence>
<evidence type="ECO:0000303" key="9">
    <source>
    </source>
</evidence>
<evidence type="ECO:0000303" key="10">
    <source>
    </source>
</evidence>
<evidence type="ECO:0000305" key="11"/>
<evidence type="ECO:0000312" key="12">
    <source>
        <dbReference type="EMBL" id="BAB62291.1"/>
    </source>
</evidence>
<evidence type="ECO:0000312" key="13">
    <source>
        <dbReference type="EMBL" id="CCD69637.1"/>
    </source>
</evidence>
<evidence type="ECO:0000312" key="14">
    <source>
        <dbReference type="Proteomes" id="UP000001940"/>
    </source>
</evidence>
<evidence type="ECO:0000312" key="15">
    <source>
        <dbReference type="WormBase" id="F35H10.4"/>
    </source>
</evidence>
<feature type="chain" id="PRO_0000454081" description="V-type proton ATPase 116 kDa subunit a 2">
    <location>
        <begin position="1"/>
        <end position="873"/>
    </location>
</feature>
<feature type="topological domain" description="Cytoplasmic" evidence="11">
    <location>
        <begin position="1"/>
        <end position="407"/>
    </location>
</feature>
<feature type="transmembrane region" description="Helical" evidence="3">
    <location>
        <begin position="408"/>
        <end position="428"/>
    </location>
</feature>
<feature type="topological domain" description="Lumenal" evidence="11">
    <location>
        <begin position="429"/>
        <end position="445"/>
    </location>
</feature>
<feature type="transmembrane region" description="Helical" evidence="3">
    <location>
        <begin position="446"/>
        <end position="466"/>
    </location>
</feature>
<feature type="topological domain" description="Cytoplasmic" evidence="11">
    <location>
        <begin position="467"/>
        <end position="543"/>
    </location>
</feature>
<feature type="transmembrane region" description="Helical" evidence="3">
    <location>
        <begin position="544"/>
        <end position="564"/>
    </location>
</feature>
<feature type="topological domain" description="Lumenal" evidence="11">
    <location>
        <begin position="565"/>
        <end position="574"/>
    </location>
</feature>
<feature type="transmembrane region" description="Helical" evidence="3">
    <location>
        <begin position="575"/>
        <end position="595"/>
    </location>
</feature>
<feature type="topological domain" description="Cytoplasmic" evidence="11">
    <location>
        <begin position="596"/>
        <end position="614"/>
    </location>
</feature>
<feature type="transmembrane region" description="Helical" evidence="3">
    <location>
        <begin position="615"/>
        <end position="635"/>
    </location>
</feature>
<feature type="topological domain" description="Lumenal" evidence="11">
    <location>
        <begin position="636"/>
        <end position="668"/>
    </location>
</feature>
<feature type="transmembrane region" description="Helical" evidence="3">
    <location>
        <begin position="669"/>
        <end position="689"/>
    </location>
</feature>
<feature type="topological domain" description="Cytoplasmic" evidence="11">
    <location>
        <begin position="690"/>
        <end position="785"/>
    </location>
</feature>
<feature type="transmembrane region" description="Helical" evidence="3">
    <location>
        <begin position="786"/>
        <end position="806"/>
    </location>
</feature>
<feature type="topological domain" description="Lumenal" evidence="11">
    <location>
        <position position="807"/>
    </location>
</feature>
<feature type="transmembrane region" description="Helical" evidence="3">
    <location>
        <begin position="808"/>
        <end position="828"/>
    </location>
</feature>
<feature type="topological domain" description="Cytoplasmic" evidence="11">
    <location>
        <begin position="829"/>
        <end position="873"/>
    </location>
</feature>
<feature type="glycosylation site" description="N-linked (GlcNAc...) asparagine" evidence="4">
    <location>
        <position position="565"/>
    </location>
</feature>
<feature type="glycosylation site" description="N-linked (GlcNAc...) asparagine" evidence="4">
    <location>
        <position position="569"/>
    </location>
</feature>
<feature type="mutagenesis site" description="Section of excretory canal is increased with multiple lumens and abnormal whorls. No defect in collagen secretion." evidence="7">
    <original>W</original>
    <variation>A</variation>
    <location>
        <position position="190"/>
    </location>
</feature>
<feature type="mutagenesis site" description="Section of excretory canal is increased with multiple lumens and abnormal whorls." evidence="7">
    <original>R</original>
    <variation>A</variation>
    <location>
        <position position="191"/>
    </location>
</feature>
<feature type="mutagenesis site" description="Section of excretory canal is increased with multiple lumens and abnormal whorls. Impaired alae formation. Accumulation of multivesicular bodies in the epidermis. Animals are shorter and dumpier." evidence="7">
    <original>W</original>
    <variation>A</variation>
    <location>
        <position position="327"/>
    </location>
</feature>
<feature type="mutagenesis site" description="Impaired alae formation. Animals are shorter and dumpier. Accumulation of multivesicular bodies in the epidermis. Impaired secretion of Hedgehog-related peptides such as wrt-2 in the epidermis. Accumulates together with che-14 and rdy-2 in multivesicular bodies but not in amphid sheath cells." evidence="7 8">
    <original>L</original>
    <variation>S</variation>
    <location>
        <position position="786"/>
    </location>
</feature>
<feature type="mutagenesis site" description="Impaired alae formation. Animals are shorter and dumpier. Accumulation of multivesicular bodies in the epidermis. Impaired secretion of Hedgehog-related peptides such as wrt-2 in the epidermis." evidence="7">
    <original>E</original>
    <variation>Q</variation>
    <location>
        <position position="830"/>
    </location>
</feature>
<feature type="mutagenesis site" description="Impaired alae formation. Animals are shorter and dumpier. Accumulation of multivesicular bodies in the epidermis. No defect in collagen secretion." evidence="7">
    <original>V</original>
    <variation>F</variation>
    <location>
        <position position="844"/>
    </location>
</feature>
<accession>G5EEK9</accession>
<gene>
    <name evidence="9 15" type="primary">vha-5</name>
    <name evidence="10" type="synonym">rdy-1</name>
    <name evidence="13" type="ORF">F35H10.4</name>
</gene>
<comment type="function">
    <text evidence="1 2 7 8">Subunit of the V0 complex of vacuolar(H+)-ATPase (V-ATPase), a multisubunit enzyme composed of a peripheral complex (V1) that hydrolyzes ATP and a membrane integral complex (V0) that translocates protons (By similarity). V-ATPase is responsible for acidifying and maintaining the pH of intracellular compartments and in some cell types, is targeted to the plasma membrane, where it is responsible for acidifying the extracellular environment (By similarity). Involved in the assembly of the V-ATPase complex (PubMed:17179093). The V-ATPase is required for the function of the excretory canal (PubMed:16785323, PubMed:17179093). Independently of the V1 complex, the V0 complex of the V-ATPase is required for multivesicular body membrane fusion with the apical membrane of the epidermal cells during exosome release and thus regulates the release of cuticle components such as Hedgehog-related peptide wrt-2 but not collagen (PubMed:16785323). Also, in the epidermis, regulates the trafficking of che-14 and rdy-2 (PubMed:17179093). Regulates the secretion of granular material found in the amphid channel and in controlling osmoregulation in the amphid pocket (PubMed:17179093).</text>
</comment>
<comment type="subunit">
    <text evidence="2 6">V-ATPase is a heteromultimeric enzyme made up of two complexes: the ATP-hydrolytic V1 complex and the proton translocation V0 complex (By similarity). The V1 complex consists of three catalytic AB heterodimers that form a heterohexamer, three peripheral stalks each consisting of EG heterodimers, one central rotor including subunits D and F, and the regulatory subunits C and H (By similarity). The proton translocation complex V0 consists of the proton transport subunit a, a ring of proteolipid subunits c9c'', rotary subunit d, subunits e and f, and the accessory subunits vah-19/Ac45 and vah-20/PRR (By similarity). Interacts with V-type proton ATPase subunit C vha-11 (PubMed:11441002).</text>
</comment>
<comment type="subcellular location">
    <subcellularLocation>
        <location evidence="6 7">Apical cell membrane</location>
        <topology evidence="3">Multi-pass membrane protein</topology>
    </subcellularLocation>
    <subcellularLocation>
        <location evidence="7">Endosome</location>
        <location evidence="7">Multivesicular body membrane</location>
        <topology evidence="3">Multi-pass membrane protein</topology>
    </subcellularLocation>
    <text evidence="6 7 8">In embryos, localizes to dot-like compartments or in cup-shaped structures (PubMed:11441002). Localizes to multivesicular body membranes in the epidermis (PubMed:16785323). Colocalizes with vha-8 to stacked sheets of the apical cell membrane of syncytial hypodermal cells (PubMed:16785323). In the epidermis, localizes to dispersed spots during intermolts which becomes aligned and colocalizes with actin bundles during the molts (PubMed:17179093).</text>
</comment>
<comment type="tissue specificity">
    <text evidence="6 7 8">Expressed in the H-shaped excretory cell (at protein level) (PubMed:11441002, PubMed:16785323, PubMed:17179093). Expressed in hypodermal cells around the vulva (PubMed:11441002). Expressed in the main epidermal syncytium (PubMed:16785323, PubMed:17179093). Expressed in the sheath cells associated with head and tail sensory organs; specifically, expressed in the apical sheath cells of the amphids and CEP neuron and in the sheath cells of the OLQ sensory organ (PubMed:17179093).</text>
</comment>
<comment type="developmental stage">
    <text evidence="6">Expressed in embryos (at protein level) (PubMed:11441002). Expressed in the H-shaped excretory cell and pharynx in L2 larvae and adults (PubMed:11441002).</text>
</comment>
<comment type="disruption phenotype">
    <text evidence="6 7">RNAi-mediated knockdown causes larval lethality at the L2 stage (PubMed:11441002, PubMed:16785323). RNAi-mediated knockdown causes defects in alae formation in L1 larvae and in the few surviving adults (PubMed:16785323). Shorter body length (PubMed:16785323).</text>
</comment>
<comment type="similarity">
    <text evidence="5">Belongs to the V-ATPase 116 kDa subunit family.</text>
</comment>
<keyword id="KW-1003">Cell membrane</keyword>
<keyword id="KW-0967">Endosome</keyword>
<keyword id="KW-0325">Glycoprotein</keyword>
<keyword id="KW-0375">Hydrogen ion transport</keyword>
<keyword id="KW-0406">Ion transport</keyword>
<keyword id="KW-0472">Membrane</keyword>
<keyword id="KW-1185">Reference proteome</keyword>
<keyword id="KW-0812">Transmembrane</keyword>
<keyword id="KW-1133">Transmembrane helix</keyword>
<keyword id="KW-0813">Transport</keyword>
<dbReference type="EMBL" id="AB055110">
    <property type="protein sequence ID" value="BAB62291.1"/>
    <property type="molecule type" value="mRNA"/>
</dbReference>
<dbReference type="EMBL" id="BX284604">
    <property type="protein sequence ID" value="CCD69637.1"/>
    <property type="molecule type" value="Genomic_DNA"/>
</dbReference>
<dbReference type="PIR" id="T16282">
    <property type="entry name" value="T16282"/>
</dbReference>
<dbReference type="RefSeq" id="NP_501399.1">
    <property type="nucleotide sequence ID" value="NM_068998.10"/>
</dbReference>
<dbReference type="SMR" id="G5EEK9"/>
<dbReference type="FunCoup" id="G5EEK9">
    <property type="interactions" value="466"/>
</dbReference>
<dbReference type="STRING" id="6239.F35H10.4.1"/>
<dbReference type="TCDB" id="3.A.2.2.7">
    <property type="family name" value="the h+- or na+-translocating f-type, v-type and a-type atpase (f-atpase) superfamily"/>
</dbReference>
<dbReference type="GlyCosmos" id="G5EEK9">
    <property type="glycosylation" value="2 sites, No reported glycans"/>
</dbReference>
<dbReference type="PaxDb" id="6239-F35H10.4.1"/>
<dbReference type="PeptideAtlas" id="G5EEK9"/>
<dbReference type="EnsemblMetazoa" id="F35H10.4.1">
    <property type="protein sequence ID" value="F35H10.4.1"/>
    <property type="gene ID" value="WBGene00006914"/>
</dbReference>
<dbReference type="EnsemblMetazoa" id="F35H10.4.2">
    <property type="protein sequence ID" value="F35H10.4.2"/>
    <property type="gene ID" value="WBGene00006914"/>
</dbReference>
<dbReference type="EnsemblMetazoa" id="F35H10.4.3">
    <property type="protein sequence ID" value="F35H10.4.3"/>
    <property type="gene ID" value="WBGene00006914"/>
</dbReference>
<dbReference type="GeneID" id="177626"/>
<dbReference type="KEGG" id="cel:CELE_F35H10.4"/>
<dbReference type="AGR" id="WB:WBGene00006914"/>
<dbReference type="CTD" id="177626"/>
<dbReference type="WormBase" id="F35H10.4">
    <property type="protein sequence ID" value="CE04504"/>
    <property type="gene ID" value="WBGene00006914"/>
    <property type="gene designation" value="vha-5"/>
</dbReference>
<dbReference type="eggNOG" id="KOG2189">
    <property type="taxonomic scope" value="Eukaryota"/>
</dbReference>
<dbReference type="GeneTree" id="ENSGT00950000182881"/>
<dbReference type="HOGENOM" id="CLU_005230_0_0_1"/>
<dbReference type="InParanoid" id="G5EEK9"/>
<dbReference type="OMA" id="CIFMYLC"/>
<dbReference type="OrthoDB" id="10264220at2759"/>
<dbReference type="PhylomeDB" id="G5EEK9"/>
<dbReference type="Reactome" id="R-CEL-1222556">
    <property type="pathway name" value="ROS and RNS production in phagocytes"/>
</dbReference>
<dbReference type="Reactome" id="R-CEL-6798695">
    <property type="pathway name" value="Neutrophil degranulation"/>
</dbReference>
<dbReference type="Reactome" id="R-CEL-77387">
    <property type="pathway name" value="Insulin receptor recycling"/>
</dbReference>
<dbReference type="Reactome" id="R-CEL-917977">
    <property type="pathway name" value="Transferrin endocytosis and recycling"/>
</dbReference>
<dbReference type="Reactome" id="R-CEL-9639288">
    <property type="pathway name" value="Amino acids regulate mTORC1"/>
</dbReference>
<dbReference type="Reactome" id="R-CEL-983712">
    <property type="pathway name" value="Ion channel transport"/>
</dbReference>
<dbReference type="PRO" id="PR:G5EEK9"/>
<dbReference type="Proteomes" id="UP000001940">
    <property type="component" value="Chromosome IV"/>
</dbReference>
<dbReference type="Bgee" id="WBGene00006914">
    <property type="expression patterns" value="Expressed in larva and 6 other cell types or tissues"/>
</dbReference>
<dbReference type="GO" id="GO:0016324">
    <property type="term" value="C:apical plasma membrane"/>
    <property type="evidence" value="ECO:0000314"/>
    <property type="project" value="WormBase"/>
</dbReference>
<dbReference type="GO" id="GO:0044298">
    <property type="term" value="C:cell body membrane"/>
    <property type="evidence" value="ECO:0000314"/>
    <property type="project" value="WormBase"/>
</dbReference>
<dbReference type="GO" id="GO:0031410">
    <property type="term" value="C:cytoplasmic vesicle"/>
    <property type="evidence" value="ECO:0000314"/>
    <property type="project" value="WormBase"/>
</dbReference>
<dbReference type="GO" id="GO:0070382">
    <property type="term" value="C:exocytic vesicle"/>
    <property type="evidence" value="ECO:0000314"/>
    <property type="project" value="WormBase"/>
</dbReference>
<dbReference type="GO" id="GO:0005771">
    <property type="term" value="C:multivesicular body"/>
    <property type="evidence" value="ECO:0000314"/>
    <property type="project" value="WormBase"/>
</dbReference>
<dbReference type="GO" id="GO:0032585">
    <property type="term" value="C:multivesicular body membrane"/>
    <property type="evidence" value="ECO:0007669"/>
    <property type="project" value="UniProtKB-SubCell"/>
</dbReference>
<dbReference type="GO" id="GO:0005886">
    <property type="term" value="C:plasma membrane"/>
    <property type="evidence" value="ECO:0000318"/>
    <property type="project" value="GO_Central"/>
</dbReference>
<dbReference type="GO" id="GO:0016471">
    <property type="term" value="C:vacuolar proton-transporting V-type ATPase complex"/>
    <property type="evidence" value="ECO:0000353"/>
    <property type="project" value="WormBase"/>
</dbReference>
<dbReference type="GO" id="GO:0000220">
    <property type="term" value="C:vacuolar proton-transporting V-type ATPase, V0 domain"/>
    <property type="evidence" value="ECO:0007669"/>
    <property type="project" value="InterPro"/>
</dbReference>
<dbReference type="GO" id="GO:0051117">
    <property type="term" value="F:ATPase binding"/>
    <property type="evidence" value="ECO:0000318"/>
    <property type="project" value="GO_Central"/>
</dbReference>
<dbReference type="GO" id="GO:0046961">
    <property type="term" value="F:proton-transporting ATPase activity, rotational mechanism"/>
    <property type="evidence" value="ECO:0007669"/>
    <property type="project" value="InterPro"/>
</dbReference>
<dbReference type="GO" id="GO:0040002">
    <property type="term" value="P:collagen and cuticulin-based cuticle development"/>
    <property type="evidence" value="ECO:0000315"/>
    <property type="project" value="WormBase"/>
</dbReference>
<dbReference type="GO" id="GO:1990182">
    <property type="term" value="P:exosomal secretion"/>
    <property type="evidence" value="ECO:0000314"/>
    <property type="project" value="WormBase"/>
</dbReference>
<dbReference type="GO" id="GO:0050891">
    <property type="term" value="P:multicellular organismal-level water homeostasis"/>
    <property type="evidence" value="ECO:0000315"/>
    <property type="project" value="WormBase"/>
</dbReference>
<dbReference type="GO" id="GO:0002119">
    <property type="term" value="P:nematode larval development"/>
    <property type="evidence" value="ECO:0000315"/>
    <property type="project" value="WormBase"/>
</dbReference>
<dbReference type="GO" id="GO:0051046">
    <property type="term" value="P:regulation of secretion"/>
    <property type="evidence" value="ECO:0000315"/>
    <property type="project" value="WormBase"/>
</dbReference>
<dbReference type="GO" id="GO:0007035">
    <property type="term" value="P:vacuolar acidification"/>
    <property type="evidence" value="ECO:0000318"/>
    <property type="project" value="GO_Central"/>
</dbReference>
<dbReference type="InterPro" id="IPR002490">
    <property type="entry name" value="V-ATPase_116kDa_su"/>
</dbReference>
<dbReference type="InterPro" id="IPR026028">
    <property type="entry name" value="V-type_ATPase_116kDa_su_euka"/>
</dbReference>
<dbReference type="PANTHER" id="PTHR11629:SF73">
    <property type="entry name" value="V-TYPE PROTON ATPASE 116 KDA SUBUNIT A 2"/>
    <property type="match status" value="1"/>
</dbReference>
<dbReference type="PANTHER" id="PTHR11629">
    <property type="entry name" value="VACUOLAR PROTON ATPASES"/>
    <property type="match status" value="1"/>
</dbReference>
<dbReference type="Pfam" id="PF01496">
    <property type="entry name" value="V_ATPase_I"/>
    <property type="match status" value="1"/>
</dbReference>
<dbReference type="PIRSF" id="PIRSF001293">
    <property type="entry name" value="ATP6V0A1"/>
    <property type="match status" value="1"/>
</dbReference>
<proteinExistence type="evidence at protein level"/>
<sequence length="873" mass="99313">MGSLSRSEEMRFCQLIVEKDAAFNIVAEIGKQPYVQFKDLNPNVNSFQRTFVKDIRRYDEMERKLRFLESQIVKDEIVIPGRVDTGDYTILPTSELNTLEGTLTELEKDVKSMNDSDSQLKANFMDLKEWDAVLDKTDEFFQGGVDDQAQEELENLDEEGAVPRVEKGPVNYLVGIIRRERLNGFERVLWRACHHTAYIRSSDIEEELEDPGTGEKVHKSVFIIFLKGDRMRSIVEKVCDGFKAKLFKNCPKTFKERQSARNDVRARIQDLQTVLGQTREHRFRVLQAAANNHHQWLKQVRMIKTVFHMLNLFTFDGIGRFFVGECWIPLKHVEDVRKAIEVGAERSGSSVKPVLNILETSVTPPTYNETNKFTAVFQGIVDSYGIATYRELNPAPYTIITFPFLFSCMFGDLGHGCIMLMAGLWFVLREKNLQARNIKDEIFNMFFGGRYIILLMGLFSIHAGIIYNDMFAKSFNIFGSGWKNPYNASEIEGWINRTEHGKEMLVELAPEDAYDHAGGPYSFGVDPIWNIAENKLNFLNSMKMKLSVILGISQMTFGVILSFFNHTYNKSKIDIFTVFIPQMLFMGCIFMYLCLQIILKWLFFWTKEATVFGQIYPGSHCAPSLLIGLINMFMMKDRNAGFVVDGGKVNGEYREVETCYLSQWYPGQSVIEMILVVIAVICVPVMLFGKPIHHVMQQKKKAKELHGNATVRANVVSDSSEIVLNGGSKKEGAAHEEHGHGGHEDESFGDIMVHQAIHTIEYVLGCVSHTASYLRLWALSLAHAQLSEVLWHMVFVTGGLGISGTAGFIAVYVVFFIFFVLTISILVLMEGLSAFLHTLRLHWVEFQSKFYLGLGYPFVPYSFKTALQEAEAA</sequence>
<organism evidence="14">
    <name type="scientific">Caenorhabditis elegans</name>
    <dbReference type="NCBI Taxonomy" id="6239"/>
    <lineage>
        <taxon>Eukaryota</taxon>
        <taxon>Metazoa</taxon>
        <taxon>Ecdysozoa</taxon>
        <taxon>Nematoda</taxon>
        <taxon>Chromadorea</taxon>
        <taxon>Rhabditida</taxon>
        <taxon>Rhabditina</taxon>
        <taxon>Rhabditomorpha</taxon>
        <taxon>Rhabditoidea</taxon>
        <taxon>Rhabditidae</taxon>
        <taxon>Peloderinae</taxon>
        <taxon>Caenorhabditis</taxon>
    </lineage>
</organism>